<sequence length="343" mass="37409">MDHAADAHRTDLMTITRHVLNEQSRNPESRGDFTILLSHIVLGCKFVASAVNKAGLAQLIGLAGETNVQGEEQKKLDVLSNEVFVKALVSSGRTCVLVSEEDEETTFVDPKLRGKYCVCFDPLDGSSNIDCGVSIGTIFGIYMIKDKDNVTLSDVLQPGKDMLAAGYCMYGSSCTLVLSTGTGVNGFTLDPSLGEFILTHPDIKIPKKGKIYSVNEGNAKNWDVPVAKFVEKCKYPKDGSPPKSLRYIGSMVADVHRTLLYGGVFLYPADQKSPNGKLRVLYEVFPMSFLMEQAGGQSFTGKERALDLVPTKIHERSPIFLGSYDDVEEIKALYAEQAKSSSA</sequence>
<reference key="1">
    <citation type="online journal article" date="1995" name="Plant Gene Register">
        <title>Sequence of a cDNA encoding cytosolic fructose-1,6-bisphosphatase from Sugarcane (Saccharum L.).</title>
        <authorList>
            <person name="Grof C.P.L."/>
            <person name="Glassop D."/>
            <person name="Bugos R.C."/>
            <person name="Moore P.H."/>
        </authorList>
        <locator>PGR95-057</locator>
    </citation>
    <scope>NUCLEOTIDE SEQUENCE [MRNA]</scope>
    <source>
        <strain>cv. H65-7052</strain>
    </source>
</reference>
<organism>
    <name type="scientific">Saccharum hybrid</name>
    <name type="common">Sugarcane</name>
    <dbReference type="NCBI Taxonomy" id="15819"/>
    <lineage>
        <taxon>Eukaryota</taxon>
        <taxon>Viridiplantae</taxon>
        <taxon>Streptophyta</taxon>
        <taxon>Embryophyta</taxon>
        <taxon>Tracheophyta</taxon>
        <taxon>Spermatophyta</taxon>
        <taxon>Magnoliopsida</taxon>
        <taxon>Liliopsida</taxon>
        <taxon>Poales</taxon>
        <taxon>Poaceae</taxon>
        <taxon>PACMAD clade</taxon>
        <taxon>Panicoideae</taxon>
        <taxon>Andropogonodae</taxon>
        <taxon>Andropogoneae</taxon>
        <taxon>Saccharinae</taxon>
        <taxon>Saccharum</taxon>
    </lineage>
</organism>
<protein>
    <recommendedName>
        <fullName>Fructose-1,6-bisphosphatase, cytosolic</fullName>
        <shortName>FBPase</shortName>
        <ecNumber>3.1.3.11</ecNumber>
    </recommendedName>
    <alternativeName>
        <fullName>D-fructose-1,6-bisphosphate 1-phosphohydrolase</fullName>
    </alternativeName>
</protein>
<feature type="chain" id="PRO_0000200519" description="Fructose-1,6-bisphosphatase, cytosolic">
    <location>
        <begin position="1"/>
        <end position="343"/>
    </location>
</feature>
<feature type="binding site" evidence="1">
    <location>
        <position position="71"/>
    </location>
    <ligand>
        <name>Mg(2+)</name>
        <dbReference type="ChEBI" id="CHEBI:18420"/>
        <label>1</label>
    </ligand>
</feature>
<feature type="binding site" evidence="1">
    <location>
        <position position="100"/>
    </location>
    <ligand>
        <name>Mg(2+)</name>
        <dbReference type="ChEBI" id="CHEBI:18420"/>
        <label>1</label>
    </ligand>
</feature>
<feature type="binding site" evidence="1">
    <location>
        <position position="100"/>
    </location>
    <ligand>
        <name>Mg(2+)</name>
        <dbReference type="ChEBI" id="CHEBI:18420"/>
        <label>2</label>
    </ligand>
</feature>
<feature type="binding site" evidence="1">
    <location>
        <position position="121"/>
    </location>
    <ligand>
        <name>Mg(2+)</name>
        <dbReference type="ChEBI" id="CHEBI:18420"/>
        <label>2</label>
    </ligand>
</feature>
<feature type="binding site" evidence="1">
    <location>
        <position position="121"/>
    </location>
    <ligand>
        <name>Mg(2+)</name>
        <dbReference type="ChEBI" id="CHEBI:18420"/>
        <label>3</label>
    </ligand>
</feature>
<feature type="binding site" evidence="1">
    <location>
        <position position="123"/>
    </location>
    <ligand>
        <name>Mg(2+)</name>
        <dbReference type="ChEBI" id="CHEBI:18420"/>
        <label>2</label>
    </ligand>
</feature>
<feature type="binding site" evidence="1">
    <location>
        <begin position="124"/>
        <end position="127"/>
    </location>
    <ligand>
        <name>substrate</name>
    </ligand>
</feature>
<feature type="binding site" evidence="1">
    <location>
        <position position="124"/>
    </location>
    <ligand>
        <name>Mg(2+)</name>
        <dbReference type="ChEBI" id="CHEBI:18420"/>
        <label>3</label>
    </ligand>
</feature>
<feature type="binding site" evidence="1">
    <location>
        <position position="215"/>
    </location>
    <ligand>
        <name>substrate</name>
    </ligand>
</feature>
<feature type="binding site" evidence="1">
    <location>
        <position position="247"/>
    </location>
    <ligand>
        <name>substrate</name>
    </ligand>
</feature>
<feature type="binding site" evidence="1">
    <location>
        <position position="267"/>
    </location>
    <ligand>
        <name>substrate</name>
    </ligand>
</feature>
<feature type="binding site" evidence="1">
    <location>
        <position position="277"/>
    </location>
    <ligand>
        <name>substrate</name>
    </ligand>
</feature>
<feature type="binding site" evidence="1">
    <location>
        <position position="283"/>
    </location>
    <ligand>
        <name>Mg(2+)</name>
        <dbReference type="ChEBI" id="CHEBI:18420"/>
        <label>3</label>
    </ligand>
</feature>
<comment type="catalytic activity">
    <reaction>
        <text>beta-D-fructose 1,6-bisphosphate + H2O = beta-D-fructose 6-phosphate + phosphate</text>
        <dbReference type="Rhea" id="RHEA:11064"/>
        <dbReference type="ChEBI" id="CHEBI:15377"/>
        <dbReference type="ChEBI" id="CHEBI:32966"/>
        <dbReference type="ChEBI" id="CHEBI:43474"/>
        <dbReference type="ChEBI" id="CHEBI:57634"/>
        <dbReference type="EC" id="3.1.3.11"/>
    </reaction>
</comment>
<comment type="cofactor">
    <cofactor evidence="1">
        <name>Mg(2+)</name>
        <dbReference type="ChEBI" id="CHEBI:18420"/>
    </cofactor>
    <text evidence="1">Binds 3 Mg(2+) ions per subunit.</text>
</comment>
<comment type="subcellular location">
    <subcellularLocation>
        <location>Cytoplasm</location>
    </subcellularLocation>
</comment>
<comment type="miscellaneous">
    <text>In plants there are two FBPase isozymes: one in the cytosol and the other in the chloroplast.</text>
</comment>
<comment type="similarity">
    <text evidence="2">Belongs to the FBPase class 1 family.</text>
</comment>
<comment type="sequence caution" evidence="2">
    <conflict type="erroneous initiation">
        <sequence resource="EMBL-CDS" id="CAA61409"/>
    </conflict>
</comment>
<name>F16P2_SACHY</name>
<dbReference type="EC" id="3.1.3.11"/>
<dbReference type="EMBL" id="X89006">
    <property type="protein sequence ID" value="CAA61409.1"/>
    <property type="status" value="ALT_INIT"/>
    <property type="molecule type" value="mRNA"/>
</dbReference>
<dbReference type="PIR" id="S57717">
    <property type="entry name" value="S57717"/>
</dbReference>
<dbReference type="SMR" id="Q43139"/>
<dbReference type="GO" id="GO:0005829">
    <property type="term" value="C:cytosol"/>
    <property type="evidence" value="ECO:0007669"/>
    <property type="project" value="TreeGrafter"/>
</dbReference>
<dbReference type="GO" id="GO:0042132">
    <property type="term" value="F:fructose 1,6-bisphosphate 1-phosphatase activity"/>
    <property type="evidence" value="ECO:0007669"/>
    <property type="project" value="UniProtKB-EC"/>
</dbReference>
<dbReference type="GO" id="GO:0046872">
    <property type="term" value="F:metal ion binding"/>
    <property type="evidence" value="ECO:0007669"/>
    <property type="project" value="UniProtKB-KW"/>
</dbReference>
<dbReference type="GO" id="GO:0030388">
    <property type="term" value="P:fructose 1,6-bisphosphate metabolic process"/>
    <property type="evidence" value="ECO:0007669"/>
    <property type="project" value="TreeGrafter"/>
</dbReference>
<dbReference type="GO" id="GO:0006002">
    <property type="term" value="P:fructose 6-phosphate metabolic process"/>
    <property type="evidence" value="ECO:0007669"/>
    <property type="project" value="TreeGrafter"/>
</dbReference>
<dbReference type="GO" id="GO:0006000">
    <property type="term" value="P:fructose metabolic process"/>
    <property type="evidence" value="ECO:0007669"/>
    <property type="project" value="TreeGrafter"/>
</dbReference>
<dbReference type="GO" id="GO:0006094">
    <property type="term" value="P:gluconeogenesis"/>
    <property type="evidence" value="ECO:0007669"/>
    <property type="project" value="TreeGrafter"/>
</dbReference>
<dbReference type="GO" id="GO:0005986">
    <property type="term" value="P:sucrose biosynthetic process"/>
    <property type="evidence" value="ECO:0007669"/>
    <property type="project" value="TreeGrafter"/>
</dbReference>
<dbReference type="CDD" id="cd00354">
    <property type="entry name" value="FBPase"/>
    <property type="match status" value="1"/>
</dbReference>
<dbReference type="FunFam" id="3.40.190.80:FF:000001">
    <property type="entry name" value="Fructose-1,6-bisphosphatase class 1"/>
    <property type="match status" value="1"/>
</dbReference>
<dbReference type="FunFam" id="3.30.540.10:FF:000008">
    <property type="entry name" value="Fructose-1,6-bisphosphatase, cytosolic"/>
    <property type="match status" value="1"/>
</dbReference>
<dbReference type="Gene3D" id="3.40.190.80">
    <property type="match status" value="1"/>
</dbReference>
<dbReference type="Gene3D" id="3.30.540.10">
    <property type="entry name" value="Fructose-1,6-Bisphosphatase, subunit A, domain 1"/>
    <property type="match status" value="1"/>
</dbReference>
<dbReference type="HAMAP" id="MF_01855">
    <property type="entry name" value="FBPase_class1"/>
    <property type="match status" value="1"/>
</dbReference>
<dbReference type="InterPro" id="IPR044015">
    <property type="entry name" value="FBPase_C_dom"/>
</dbReference>
<dbReference type="InterPro" id="IPR000146">
    <property type="entry name" value="FBPase_class-1"/>
</dbReference>
<dbReference type="InterPro" id="IPR033391">
    <property type="entry name" value="FBPase_N"/>
</dbReference>
<dbReference type="InterPro" id="IPR028343">
    <property type="entry name" value="FBPtase"/>
</dbReference>
<dbReference type="InterPro" id="IPR020548">
    <property type="entry name" value="Fructose_bisphosphatase_AS"/>
</dbReference>
<dbReference type="NCBIfam" id="NF006778">
    <property type="entry name" value="PRK09293.1-1"/>
    <property type="match status" value="1"/>
</dbReference>
<dbReference type="NCBIfam" id="NF006779">
    <property type="entry name" value="PRK09293.1-3"/>
    <property type="match status" value="1"/>
</dbReference>
<dbReference type="PANTHER" id="PTHR11556:SF41">
    <property type="entry name" value="FRUCTOSE-1,6-BISPHOSPHATASE, CYTOSOLIC"/>
    <property type="match status" value="1"/>
</dbReference>
<dbReference type="PANTHER" id="PTHR11556">
    <property type="entry name" value="FRUCTOSE-1,6-BISPHOSPHATASE-RELATED"/>
    <property type="match status" value="1"/>
</dbReference>
<dbReference type="Pfam" id="PF00316">
    <property type="entry name" value="FBPase"/>
    <property type="match status" value="1"/>
</dbReference>
<dbReference type="Pfam" id="PF18913">
    <property type="entry name" value="FBPase_C"/>
    <property type="match status" value="1"/>
</dbReference>
<dbReference type="PIRSF" id="PIRSF500210">
    <property type="entry name" value="FBPtase"/>
    <property type="match status" value="1"/>
</dbReference>
<dbReference type="PIRSF" id="PIRSF000904">
    <property type="entry name" value="FBPtase_SBPase"/>
    <property type="match status" value="1"/>
</dbReference>
<dbReference type="PRINTS" id="PR00115">
    <property type="entry name" value="F16BPHPHTASE"/>
</dbReference>
<dbReference type="SUPFAM" id="SSF56655">
    <property type="entry name" value="Carbohydrate phosphatase"/>
    <property type="match status" value="1"/>
</dbReference>
<dbReference type="PROSITE" id="PS00124">
    <property type="entry name" value="FBPASE"/>
    <property type="match status" value="1"/>
</dbReference>
<proteinExistence type="evidence at transcript level"/>
<gene>
    <name type="primary">CFBP</name>
</gene>
<evidence type="ECO:0000250" key="1"/>
<evidence type="ECO:0000305" key="2"/>
<keyword id="KW-0119">Carbohydrate metabolism</keyword>
<keyword id="KW-0963">Cytoplasm</keyword>
<keyword id="KW-0378">Hydrolase</keyword>
<keyword id="KW-0460">Magnesium</keyword>
<keyword id="KW-0479">Metal-binding</keyword>
<accession>Q43139</accession>